<accession>Q0I1X3</accession>
<keyword id="KW-0028">Amino-acid biosynthesis</keyword>
<keyword id="KW-0170">Cobalt</keyword>
<keyword id="KW-0220">Diaminopimelate biosynthesis</keyword>
<keyword id="KW-0378">Hydrolase</keyword>
<keyword id="KW-0457">Lysine biosynthesis</keyword>
<keyword id="KW-0479">Metal-binding</keyword>
<keyword id="KW-0862">Zinc</keyword>
<protein>
    <recommendedName>
        <fullName evidence="1">Succinyl-diaminopimelate desuccinylase</fullName>
        <shortName evidence="1">SDAP desuccinylase</shortName>
        <ecNumber evidence="1">3.5.1.18</ecNumber>
    </recommendedName>
    <alternativeName>
        <fullName evidence="1">N-succinyl-LL-2,6-diaminoheptanedioate amidohydrolase</fullName>
    </alternativeName>
</protein>
<organism>
    <name type="scientific">Histophilus somni (strain 129Pt)</name>
    <name type="common">Haemophilus somnus</name>
    <dbReference type="NCBI Taxonomy" id="205914"/>
    <lineage>
        <taxon>Bacteria</taxon>
        <taxon>Pseudomonadati</taxon>
        <taxon>Pseudomonadota</taxon>
        <taxon>Gammaproteobacteria</taxon>
        <taxon>Pasteurellales</taxon>
        <taxon>Pasteurellaceae</taxon>
        <taxon>Histophilus</taxon>
    </lineage>
</organism>
<evidence type="ECO:0000255" key="1">
    <source>
        <dbReference type="HAMAP-Rule" id="MF_01690"/>
    </source>
</evidence>
<name>DAPE_HISS1</name>
<feature type="chain" id="PRO_0000375580" description="Succinyl-diaminopimelate desuccinylase">
    <location>
        <begin position="1"/>
        <end position="377"/>
    </location>
</feature>
<feature type="active site" evidence="1">
    <location>
        <position position="68"/>
    </location>
</feature>
<feature type="active site" description="Proton acceptor" evidence="1">
    <location>
        <position position="133"/>
    </location>
</feature>
<feature type="binding site" evidence="1">
    <location>
        <position position="66"/>
    </location>
    <ligand>
        <name>Zn(2+)</name>
        <dbReference type="ChEBI" id="CHEBI:29105"/>
        <label>1</label>
    </ligand>
</feature>
<feature type="binding site" evidence="1">
    <location>
        <position position="99"/>
    </location>
    <ligand>
        <name>Zn(2+)</name>
        <dbReference type="ChEBI" id="CHEBI:29105"/>
        <label>1</label>
    </ligand>
</feature>
<feature type="binding site" evidence="1">
    <location>
        <position position="99"/>
    </location>
    <ligand>
        <name>Zn(2+)</name>
        <dbReference type="ChEBI" id="CHEBI:29105"/>
        <label>2</label>
    </ligand>
</feature>
<feature type="binding site" evidence="1">
    <location>
        <position position="134"/>
    </location>
    <ligand>
        <name>Zn(2+)</name>
        <dbReference type="ChEBI" id="CHEBI:29105"/>
        <label>2</label>
    </ligand>
</feature>
<feature type="binding site" evidence="1">
    <location>
        <position position="162"/>
    </location>
    <ligand>
        <name>Zn(2+)</name>
        <dbReference type="ChEBI" id="CHEBI:29105"/>
        <label>1</label>
    </ligand>
</feature>
<feature type="binding site" evidence="1">
    <location>
        <position position="348"/>
    </location>
    <ligand>
        <name>Zn(2+)</name>
        <dbReference type="ChEBI" id="CHEBI:29105"/>
        <label>2</label>
    </ligand>
</feature>
<gene>
    <name evidence="1" type="primary">dapE</name>
    <name type="ordered locus">HS_0578</name>
</gene>
<dbReference type="EC" id="3.5.1.18" evidence="1"/>
<dbReference type="EMBL" id="CP000436">
    <property type="protein sequence ID" value="ABI24855.1"/>
    <property type="molecule type" value="Genomic_DNA"/>
</dbReference>
<dbReference type="SMR" id="Q0I1X3"/>
<dbReference type="KEGG" id="hso:HS_0578"/>
<dbReference type="eggNOG" id="COG0624">
    <property type="taxonomic scope" value="Bacteria"/>
</dbReference>
<dbReference type="HOGENOM" id="CLU_021802_4_0_6"/>
<dbReference type="UniPathway" id="UPA00034">
    <property type="reaction ID" value="UER00021"/>
</dbReference>
<dbReference type="GO" id="GO:0008777">
    <property type="term" value="F:acetylornithine deacetylase activity"/>
    <property type="evidence" value="ECO:0007669"/>
    <property type="project" value="TreeGrafter"/>
</dbReference>
<dbReference type="GO" id="GO:0050897">
    <property type="term" value="F:cobalt ion binding"/>
    <property type="evidence" value="ECO:0007669"/>
    <property type="project" value="UniProtKB-UniRule"/>
</dbReference>
<dbReference type="GO" id="GO:0009014">
    <property type="term" value="F:succinyl-diaminopimelate desuccinylase activity"/>
    <property type="evidence" value="ECO:0007669"/>
    <property type="project" value="UniProtKB-UniRule"/>
</dbReference>
<dbReference type="GO" id="GO:0008270">
    <property type="term" value="F:zinc ion binding"/>
    <property type="evidence" value="ECO:0007669"/>
    <property type="project" value="UniProtKB-UniRule"/>
</dbReference>
<dbReference type="GO" id="GO:0019877">
    <property type="term" value="P:diaminopimelate biosynthetic process"/>
    <property type="evidence" value="ECO:0007669"/>
    <property type="project" value="UniProtKB-UniRule"/>
</dbReference>
<dbReference type="GO" id="GO:0006526">
    <property type="term" value="P:L-arginine biosynthetic process"/>
    <property type="evidence" value="ECO:0007669"/>
    <property type="project" value="TreeGrafter"/>
</dbReference>
<dbReference type="GO" id="GO:0009089">
    <property type="term" value="P:lysine biosynthetic process via diaminopimelate"/>
    <property type="evidence" value="ECO:0007669"/>
    <property type="project" value="UniProtKB-UniRule"/>
</dbReference>
<dbReference type="CDD" id="cd03891">
    <property type="entry name" value="M20_DapE_proteobac"/>
    <property type="match status" value="1"/>
</dbReference>
<dbReference type="FunFam" id="3.30.70.360:FF:000011">
    <property type="entry name" value="Succinyl-diaminopimelate desuccinylase"/>
    <property type="match status" value="1"/>
</dbReference>
<dbReference type="FunFam" id="3.40.630.10:FF:000005">
    <property type="entry name" value="Succinyl-diaminopimelate desuccinylase"/>
    <property type="match status" value="1"/>
</dbReference>
<dbReference type="Gene3D" id="1.10.150.900">
    <property type="match status" value="1"/>
</dbReference>
<dbReference type="Gene3D" id="3.30.70.360">
    <property type="match status" value="1"/>
</dbReference>
<dbReference type="Gene3D" id="3.40.630.10">
    <property type="entry name" value="Zn peptidases"/>
    <property type="match status" value="1"/>
</dbReference>
<dbReference type="HAMAP" id="MF_01690">
    <property type="entry name" value="DapE"/>
    <property type="match status" value="1"/>
</dbReference>
<dbReference type="InterPro" id="IPR001261">
    <property type="entry name" value="ArgE/DapE_CS"/>
</dbReference>
<dbReference type="InterPro" id="IPR036264">
    <property type="entry name" value="Bact_exopeptidase_dim_dom"/>
</dbReference>
<dbReference type="InterPro" id="IPR005941">
    <property type="entry name" value="DapE_proteobac"/>
</dbReference>
<dbReference type="InterPro" id="IPR002933">
    <property type="entry name" value="Peptidase_M20"/>
</dbReference>
<dbReference type="InterPro" id="IPR011650">
    <property type="entry name" value="Peptidase_M20_dimer"/>
</dbReference>
<dbReference type="InterPro" id="IPR050072">
    <property type="entry name" value="Peptidase_M20A"/>
</dbReference>
<dbReference type="NCBIfam" id="TIGR01246">
    <property type="entry name" value="dapE_proteo"/>
    <property type="match status" value="1"/>
</dbReference>
<dbReference type="NCBIfam" id="NF009557">
    <property type="entry name" value="PRK13009.1"/>
    <property type="match status" value="1"/>
</dbReference>
<dbReference type="PANTHER" id="PTHR43808">
    <property type="entry name" value="ACETYLORNITHINE DEACETYLASE"/>
    <property type="match status" value="1"/>
</dbReference>
<dbReference type="PANTHER" id="PTHR43808:SF31">
    <property type="entry name" value="N-ACETYL-L-CITRULLINE DEACETYLASE"/>
    <property type="match status" value="1"/>
</dbReference>
<dbReference type="Pfam" id="PF07687">
    <property type="entry name" value="M20_dimer"/>
    <property type="match status" value="1"/>
</dbReference>
<dbReference type="Pfam" id="PF01546">
    <property type="entry name" value="Peptidase_M20"/>
    <property type="match status" value="1"/>
</dbReference>
<dbReference type="SUPFAM" id="SSF55031">
    <property type="entry name" value="Bacterial exopeptidase dimerisation domain"/>
    <property type="match status" value="1"/>
</dbReference>
<dbReference type="SUPFAM" id="SSF53187">
    <property type="entry name" value="Zn-dependent exopeptidases"/>
    <property type="match status" value="1"/>
</dbReference>
<dbReference type="PROSITE" id="PS00758">
    <property type="entry name" value="ARGE_DAPE_CPG2_1"/>
    <property type="match status" value="1"/>
</dbReference>
<comment type="function">
    <text evidence="1">Catalyzes the hydrolysis of N-succinyl-L,L-diaminopimelic acid (SDAP), forming succinate and LL-2,6-diaminopimelate (DAP), an intermediate involved in the bacterial biosynthesis of lysine and meso-diaminopimelic acid, an essential component of bacterial cell walls.</text>
</comment>
<comment type="catalytic activity">
    <reaction evidence="1">
        <text>N-succinyl-(2S,6S)-2,6-diaminopimelate + H2O = (2S,6S)-2,6-diaminopimelate + succinate</text>
        <dbReference type="Rhea" id="RHEA:22608"/>
        <dbReference type="ChEBI" id="CHEBI:15377"/>
        <dbReference type="ChEBI" id="CHEBI:30031"/>
        <dbReference type="ChEBI" id="CHEBI:57609"/>
        <dbReference type="ChEBI" id="CHEBI:58087"/>
        <dbReference type="EC" id="3.5.1.18"/>
    </reaction>
</comment>
<comment type="cofactor">
    <cofactor evidence="1">
        <name>Zn(2+)</name>
        <dbReference type="ChEBI" id="CHEBI:29105"/>
    </cofactor>
    <cofactor evidence="1">
        <name>Co(2+)</name>
        <dbReference type="ChEBI" id="CHEBI:48828"/>
    </cofactor>
    <text evidence="1">Binds 2 Zn(2+) or Co(2+) ions per subunit.</text>
</comment>
<comment type="pathway">
    <text evidence="1">Amino-acid biosynthesis; L-lysine biosynthesis via DAP pathway; LL-2,6-diaminopimelate from (S)-tetrahydrodipicolinate (succinylase route): step 3/3.</text>
</comment>
<comment type="subunit">
    <text evidence="1">Homodimer.</text>
</comment>
<comment type="similarity">
    <text evidence="1">Belongs to the peptidase M20A family. DapE subfamily.</text>
</comment>
<proteinExistence type="inferred from homology"/>
<sequence length="377" mass="41820">MKNNIITLTQSLIQRPSISPDDQGCQQLIAERLQAVGFKLEWLPFGDTLNLWATHGEGKCIAFAGHTDVVPIGNESQWTYLPFEARIVENMLYGRGAADMKGALAAMVIAAETFVKHLPNHQGKIALLITSDEEAAATNGTVKVVETLIKRNEKIDYCVVGEPSSATQFGDIIKNGRRGSITGNLYIQGVQGHVAYPHLADNPVHNALKFLDELTHYQWDKGNEFFPPTSLQIANIHAGTGSNNVIPGELYVQFNLRYCTEVTDEIIKTKVTEMLEKHKLTYRIDWNLSGKPFLTPQGKLVNATLEAVEKFTQIRPHLDTGGGTSDARFIATMGAEVVEFGPLNQTIHKVNECVNIDDLAKCGEIYYHILEKLFNEQ</sequence>
<reference key="1">
    <citation type="journal article" date="2007" name="J. Bacteriol.">
        <title>Complete genome sequence of Haemophilus somnus (Histophilus somni) strain 129Pt and comparison to Haemophilus ducreyi 35000HP and Haemophilus influenzae Rd.</title>
        <authorList>
            <person name="Challacombe J.F."/>
            <person name="Duncan A.J."/>
            <person name="Brettin T.S."/>
            <person name="Bruce D."/>
            <person name="Chertkov O."/>
            <person name="Detter J.C."/>
            <person name="Han C.S."/>
            <person name="Misra M."/>
            <person name="Richardson P."/>
            <person name="Tapia R."/>
            <person name="Thayer N."/>
            <person name="Xie G."/>
            <person name="Inzana T.J."/>
        </authorList>
    </citation>
    <scope>NUCLEOTIDE SEQUENCE [LARGE SCALE GENOMIC DNA]</scope>
    <source>
        <strain>129Pt</strain>
    </source>
</reference>